<accession>B1N025</accession>
<keyword id="KW-0067">ATP-binding</keyword>
<keyword id="KW-0227">DNA damage</keyword>
<keyword id="KW-0234">DNA repair</keyword>
<keyword id="KW-0238">DNA-binding</keyword>
<keyword id="KW-0547">Nucleotide-binding</keyword>
<keyword id="KW-1185">Reference proteome</keyword>
<gene>
    <name evidence="1" type="primary">mutS</name>
    <name type="ordered locus">LCK_01303</name>
</gene>
<name>MUTS_LEUCK</name>
<organism>
    <name type="scientific">Leuconostoc citreum (strain KM20)</name>
    <dbReference type="NCBI Taxonomy" id="349519"/>
    <lineage>
        <taxon>Bacteria</taxon>
        <taxon>Bacillati</taxon>
        <taxon>Bacillota</taxon>
        <taxon>Bacilli</taxon>
        <taxon>Lactobacillales</taxon>
        <taxon>Lactobacillaceae</taxon>
        <taxon>Leuconostoc</taxon>
    </lineage>
</organism>
<sequence length="865" mass="96019">MGKIADTPMMVQYHEIKAQYPDAFVFYRLGDFYELFEEDAIQGAKILELTLTARNKNSENPVPMAGIPHHAAQNYIDILVDQGYKVAIVEQMEDPAVAKGMVKRDVVQLVTPGTKMADGAGGDKQNNYLAAVLPAKNVWSIAYVDLSTGELRATTTGRFEDVMDELSSLEVKEVVLSKNDVATTEQQIASQLGERGIVISAQGTAEPSATVSFLTQALKVTSEIEATTILLNYIFDTQRRSLDHIVPATSYERLKFLKFNQDTRSNLDLVENMRTKKKAGSLLGLIDRTNTAMGGRLLKQWLLKPLRESSDIEARLDLVQSFQNDFLTRGALQDHLKSVYDLERLAARAAMGTMNARELVQLKRSLRAIPGIKSVLLQADTTLSNAGQQLDDMTDLADLIDVAIVDEPPVSVREGNIINDGFDERIDGYRQVLKDNQQWLAQLEIDERAQTGINSLKVGYNKNFGYYIEVTKANIGRLATDRYQRLQTLTNAERFVTPALKQHESLIIEAQAKRTEREYELFVTVREHVKSDISRIQTLAQHIARLDVLSSLADVADNQRFVRPTFTNQHVIHIMQGRHPVVESILDAGDFVANDVILDESINMQLITGPNMAGKSTYMRELALIVILAQMGSFVPADVAELPIFDQIFTRIGANDDMAMGQSTFMVEMAEANDALQQATANSLVLFDELGRGTATYDGMALAQAIIEFLDKHIHAKTLFSTHYHELTVLADNHTSIENVHVGAVEDDEGQLHFLHQIQSGPADKSYGIHVAALAGLPKELIDNATSILHDLEAGKMIVTQTNDQVASAVIQPDAHLSEQVALFDMTVTDDKTQKILDALDNYDILNMTPVDAINALNRLKKMRS</sequence>
<reference key="1">
    <citation type="journal article" date="2008" name="J. Bacteriol.">
        <title>Complete genome sequence of Leuconostoc citreum KM20.</title>
        <authorList>
            <person name="Kim J.F."/>
            <person name="Jeong H."/>
            <person name="Lee J.-S."/>
            <person name="Choi S.-H."/>
            <person name="Ha M."/>
            <person name="Hur C.-G."/>
            <person name="Kim J.-S."/>
            <person name="Lee S."/>
            <person name="Park H.-S."/>
            <person name="Park Y.-H."/>
            <person name="Oh T.K."/>
        </authorList>
    </citation>
    <scope>NUCLEOTIDE SEQUENCE [LARGE SCALE GENOMIC DNA]</scope>
    <source>
        <strain>KM20</strain>
    </source>
</reference>
<comment type="function">
    <text evidence="1">This protein is involved in the repair of mismatches in DNA. It is possible that it carries out the mismatch recognition step. This protein has a weak ATPase activity.</text>
</comment>
<comment type="similarity">
    <text evidence="1">Belongs to the DNA mismatch repair MutS family.</text>
</comment>
<protein>
    <recommendedName>
        <fullName evidence="1">DNA mismatch repair protein MutS</fullName>
    </recommendedName>
</protein>
<proteinExistence type="inferred from homology"/>
<feature type="chain" id="PRO_1000093634" description="DNA mismatch repair protein MutS">
    <location>
        <begin position="1"/>
        <end position="865"/>
    </location>
</feature>
<feature type="binding site" evidence="1">
    <location>
        <begin position="609"/>
        <end position="616"/>
    </location>
    <ligand>
        <name>ATP</name>
        <dbReference type="ChEBI" id="CHEBI:30616"/>
    </ligand>
</feature>
<dbReference type="EMBL" id="DQ489736">
    <property type="protein sequence ID" value="ACA83127.1"/>
    <property type="molecule type" value="Genomic_DNA"/>
</dbReference>
<dbReference type="RefSeq" id="WP_012305383.1">
    <property type="nucleotide sequence ID" value="NC_010471.1"/>
</dbReference>
<dbReference type="SMR" id="B1N025"/>
<dbReference type="STRING" id="349519.LCK_01303"/>
<dbReference type="KEGG" id="lci:LCK_01303"/>
<dbReference type="eggNOG" id="COG0249">
    <property type="taxonomic scope" value="Bacteria"/>
</dbReference>
<dbReference type="HOGENOM" id="CLU_002472_4_0_9"/>
<dbReference type="OrthoDB" id="9802448at2"/>
<dbReference type="Proteomes" id="UP000002166">
    <property type="component" value="Chromosome"/>
</dbReference>
<dbReference type="GO" id="GO:0005829">
    <property type="term" value="C:cytosol"/>
    <property type="evidence" value="ECO:0007669"/>
    <property type="project" value="TreeGrafter"/>
</dbReference>
<dbReference type="GO" id="GO:0005524">
    <property type="term" value="F:ATP binding"/>
    <property type="evidence" value="ECO:0007669"/>
    <property type="project" value="UniProtKB-UniRule"/>
</dbReference>
<dbReference type="GO" id="GO:0140664">
    <property type="term" value="F:ATP-dependent DNA damage sensor activity"/>
    <property type="evidence" value="ECO:0007669"/>
    <property type="project" value="InterPro"/>
</dbReference>
<dbReference type="GO" id="GO:0003684">
    <property type="term" value="F:damaged DNA binding"/>
    <property type="evidence" value="ECO:0007669"/>
    <property type="project" value="UniProtKB-UniRule"/>
</dbReference>
<dbReference type="GO" id="GO:0030983">
    <property type="term" value="F:mismatched DNA binding"/>
    <property type="evidence" value="ECO:0007669"/>
    <property type="project" value="InterPro"/>
</dbReference>
<dbReference type="GO" id="GO:0006298">
    <property type="term" value="P:mismatch repair"/>
    <property type="evidence" value="ECO:0007669"/>
    <property type="project" value="UniProtKB-UniRule"/>
</dbReference>
<dbReference type="CDD" id="cd03284">
    <property type="entry name" value="ABC_MutS1"/>
    <property type="match status" value="1"/>
</dbReference>
<dbReference type="FunFam" id="1.10.1420.10:FF:000001">
    <property type="entry name" value="DNA mismatch repair protein MutS"/>
    <property type="match status" value="1"/>
</dbReference>
<dbReference type="FunFam" id="3.40.1170.10:FF:000001">
    <property type="entry name" value="DNA mismatch repair protein MutS"/>
    <property type="match status" value="1"/>
</dbReference>
<dbReference type="FunFam" id="3.40.50.300:FF:000870">
    <property type="entry name" value="MutS protein homolog 4"/>
    <property type="match status" value="1"/>
</dbReference>
<dbReference type="Gene3D" id="1.10.1420.10">
    <property type="match status" value="2"/>
</dbReference>
<dbReference type="Gene3D" id="3.40.1170.10">
    <property type="entry name" value="DNA repair protein MutS, domain I"/>
    <property type="match status" value="1"/>
</dbReference>
<dbReference type="Gene3D" id="3.30.420.110">
    <property type="entry name" value="MutS, connector domain"/>
    <property type="match status" value="1"/>
</dbReference>
<dbReference type="Gene3D" id="3.40.50.300">
    <property type="entry name" value="P-loop containing nucleotide triphosphate hydrolases"/>
    <property type="match status" value="1"/>
</dbReference>
<dbReference type="HAMAP" id="MF_00096">
    <property type="entry name" value="MutS"/>
    <property type="match status" value="1"/>
</dbReference>
<dbReference type="InterPro" id="IPR005748">
    <property type="entry name" value="DNA_mismatch_repair_MutS"/>
</dbReference>
<dbReference type="InterPro" id="IPR007695">
    <property type="entry name" value="DNA_mismatch_repair_MutS-lik_N"/>
</dbReference>
<dbReference type="InterPro" id="IPR017261">
    <property type="entry name" value="DNA_mismatch_repair_MutS/MSH"/>
</dbReference>
<dbReference type="InterPro" id="IPR000432">
    <property type="entry name" value="DNA_mismatch_repair_MutS_C"/>
</dbReference>
<dbReference type="InterPro" id="IPR007861">
    <property type="entry name" value="DNA_mismatch_repair_MutS_clamp"/>
</dbReference>
<dbReference type="InterPro" id="IPR007696">
    <property type="entry name" value="DNA_mismatch_repair_MutS_core"/>
</dbReference>
<dbReference type="InterPro" id="IPR016151">
    <property type="entry name" value="DNA_mismatch_repair_MutS_N"/>
</dbReference>
<dbReference type="InterPro" id="IPR036187">
    <property type="entry name" value="DNA_mismatch_repair_MutS_sf"/>
</dbReference>
<dbReference type="InterPro" id="IPR007860">
    <property type="entry name" value="DNA_mmatch_repair_MutS_con_dom"/>
</dbReference>
<dbReference type="InterPro" id="IPR045076">
    <property type="entry name" value="MutS"/>
</dbReference>
<dbReference type="InterPro" id="IPR036678">
    <property type="entry name" value="MutS_con_dom_sf"/>
</dbReference>
<dbReference type="InterPro" id="IPR027417">
    <property type="entry name" value="P-loop_NTPase"/>
</dbReference>
<dbReference type="NCBIfam" id="TIGR01070">
    <property type="entry name" value="mutS1"/>
    <property type="match status" value="1"/>
</dbReference>
<dbReference type="NCBIfam" id="NF003810">
    <property type="entry name" value="PRK05399.1"/>
    <property type="match status" value="1"/>
</dbReference>
<dbReference type="PANTHER" id="PTHR11361:SF34">
    <property type="entry name" value="DNA MISMATCH REPAIR PROTEIN MSH1, MITOCHONDRIAL"/>
    <property type="match status" value="1"/>
</dbReference>
<dbReference type="PANTHER" id="PTHR11361">
    <property type="entry name" value="DNA MISMATCH REPAIR PROTEIN MUTS FAMILY MEMBER"/>
    <property type="match status" value="1"/>
</dbReference>
<dbReference type="Pfam" id="PF01624">
    <property type="entry name" value="MutS_I"/>
    <property type="match status" value="1"/>
</dbReference>
<dbReference type="Pfam" id="PF05188">
    <property type="entry name" value="MutS_II"/>
    <property type="match status" value="1"/>
</dbReference>
<dbReference type="Pfam" id="PF05192">
    <property type="entry name" value="MutS_III"/>
    <property type="match status" value="1"/>
</dbReference>
<dbReference type="Pfam" id="PF05190">
    <property type="entry name" value="MutS_IV"/>
    <property type="match status" value="1"/>
</dbReference>
<dbReference type="Pfam" id="PF00488">
    <property type="entry name" value="MutS_V"/>
    <property type="match status" value="1"/>
</dbReference>
<dbReference type="PIRSF" id="PIRSF037677">
    <property type="entry name" value="DNA_mis_repair_Msh6"/>
    <property type="match status" value="1"/>
</dbReference>
<dbReference type="SMART" id="SM00534">
    <property type="entry name" value="MUTSac"/>
    <property type="match status" value="1"/>
</dbReference>
<dbReference type="SMART" id="SM00533">
    <property type="entry name" value="MUTSd"/>
    <property type="match status" value="1"/>
</dbReference>
<dbReference type="SUPFAM" id="SSF55271">
    <property type="entry name" value="DNA repair protein MutS, domain I"/>
    <property type="match status" value="1"/>
</dbReference>
<dbReference type="SUPFAM" id="SSF53150">
    <property type="entry name" value="DNA repair protein MutS, domain II"/>
    <property type="match status" value="1"/>
</dbReference>
<dbReference type="SUPFAM" id="SSF48334">
    <property type="entry name" value="DNA repair protein MutS, domain III"/>
    <property type="match status" value="1"/>
</dbReference>
<dbReference type="SUPFAM" id="SSF52540">
    <property type="entry name" value="P-loop containing nucleoside triphosphate hydrolases"/>
    <property type="match status" value="1"/>
</dbReference>
<dbReference type="PROSITE" id="PS00486">
    <property type="entry name" value="DNA_MISMATCH_REPAIR_2"/>
    <property type="match status" value="1"/>
</dbReference>
<evidence type="ECO:0000255" key="1">
    <source>
        <dbReference type="HAMAP-Rule" id="MF_00096"/>
    </source>
</evidence>